<protein>
    <recommendedName>
        <fullName>Histone H2B 1/2</fullName>
    </recommendedName>
</protein>
<dbReference type="EMBL" id="BC091558">
    <property type="protein sequence ID" value="AAH91558.1"/>
    <property type="molecule type" value="mRNA"/>
</dbReference>
<dbReference type="EMBL" id="BC095697">
    <property type="protein sequence ID" value="AAH95697.1"/>
    <property type="molecule type" value="mRNA"/>
</dbReference>
<dbReference type="RefSeq" id="NP_001013481.1">
    <property type="nucleotide sequence ID" value="NM_001013463.1"/>
</dbReference>
<dbReference type="RefSeq" id="XP_005170789.1">
    <property type="nucleotide sequence ID" value="XM_005170732.3"/>
</dbReference>
<dbReference type="RefSeq" id="XP_009301957.1">
    <property type="nucleotide sequence ID" value="XM_009303682.2"/>
</dbReference>
<dbReference type="RefSeq" id="XP_017209639.1">
    <property type="nucleotide sequence ID" value="XM_017354150.1"/>
</dbReference>
<dbReference type="RefSeq" id="XP_017212661.1">
    <property type="nucleotide sequence ID" value="XM_017357172.1"/>
</dbReference>
<dbReference type="SMR" id="Q5BJA5"/>
<dbReference type="FunCoup" id="Q5BJA5">
    <property type="interactions" value="1138"/>
</dbReference>
<dbReference type="STRING" id="7955.ENSDARP00000101525"/>
<dbReference type="PaxDb" id="7955-ENSDARP00000050236"/>
<dbReference type="Ensembl" id="ENSDART00000109316">
    <property type="protein sequence ID" value="ENSDARP00000101525"/>
    <property type="gene ID" value="ENSDARG00000075482"/>
</dbReference>
<dbReference type="Ensembl" id="ENSDART00000126590">
    <property type="protein sequence ID" value="ENSDARP00000111194"/>
    <property type="gene ID" value="ENSDARG00000091728"/>
</dbReference>
<dbReference type="Ensembl" id="ENSDART00000152766">
    <property type="protein sequence ID" value="ENSDARP00000127042"/>
    <property type="gene ID" value="ENSDARG00000070297"/>
</dbReference>
<dbReference type="Ensembl" id="ENSDART00000169756">
    <property type="protein sequence ID" value="ENSDARP00000139362"/>
    <property type="gene ID" value="ENSDARG00000104501"/>
</dbReference>
<dbReference type="Ensembl" id="ENSDART00000190053">
    <property type="protein sequence ID" value="ENSDARP00000151365"/>
    <property type="gene ID" value="ENSDARG00000114180"/>
</dbReference>
<dbReference type="GeneID" id="541335"/>
<dbReference type="KEGG" id="dre:100329290"/>
<dbReference type="KEGG" id="dre:100329560"/>
<dbReference type="KEGG" id="dre:541335"/>
<dbReference type="KEGG" id="dre:561322"/>
<dbReference type="eggNOG" id="KOG1744">
    <property type="taxonomic scope" value="Eukaryota"/>
</dbReference>
<dbReference type="HOGENOM" id="CLU_075666_2_1_1"/>
<dbReference type="InParanoid" id="Q5BJA5"/>
<dbReference type="OMA" id="YERVFCF"/>
<dbReference type="OrthoDB" id="10036053at2759"/>
<dbReference type="PhylomeDB" id="Q5BJA5"/>
<dbReference type="TreeFam" id="TF300212"/>
<dbReference type="Reactome" id="R-DRE-212300">
    <property type="pathway name" value="PRC2 methylates histones and DNA"/>
</dbReference>
<dbReference type="Reactome" id="R-DRE-2299718">
    <property type="pathway name" value="Condensation of Prophase Chromosomes"/>
</dbReference>
<dbReference type="Reactome" id="R-DRE-2559580">
    <property type="pathway name" value="Oxidative Stress Induced Senescence"/>
</dbReference>
<dbReference type="Reactome" id="R-DRE-3214815">
    <property type="pathway name" value="HDACs deacetylate histones"/>
</dbReference>
<dbReference type="Reactome" id="R-DRE-427413">
    <property type="pathway name" value="NoRC negatively regulates rRNA expression"/>
</dbReference>
<dbReference type="Reactome" id="R-DRE-5625886">
    <property type="pathway name" value="Activated PKN1 stimulates transcription of AR (androgen receptor) regulated genes KLK2 and KLK3"/>
</dbReference>
<dbReference type="Reactome" id="R-DRE-5689880">
    <property type="pathway name" value="Ub-specific processing proteases"/>
</dbReference>
<dbReference type="Reactome" id="R-DRE-73728">
    <property type="pathway name" value="RNA Polymerase I Promoter Opening"/>
</dbReference>
<dbReference type="Reactome" id="R-DRE-8936459">
    <property type="pathway name" value="RUNX1 regulates genes involved in megakaryocyte differentiation and platelet function"/>
</dbReference>
<dbReference type="Reactome" id="R-DRE-9018519">
    <property type="pathway name" value="Estrogen-dependent gene expression"/>
</dbReference>
<dbReference type="Reactome" id="R-DRE-9841922">
    <property type="pathway name" value="MLL4 and MLL3 complexes regulate expression of PPARG target genes in adipogenesis and hepatic steatosis"/>
</dbReference>
<dbReference type="Reactome" id="R-DRE-9843940">
    <property type="pathway name" value="Regulation of endogenous retroelements by KRAB-ZFP proteins"/>
</dbReference>
<dbReference type="Reactome" id="R-DRE-9843970">
    <property type="pathway name" value="Regulation of endogenous retroelements by the Human Silencing Hub (HUSH) complex"/>
</dbReference>
<dbReference type="PRO" id="PR:Q5BJA5"/>
<dbReference type="Proteomes" id="UP000000437">
    <property type="component" value="Chromosome 25"/>
</dbReference>
<dbReference type="Proteomes" id="UP000000437">
    <property type="component" value="Chromosome 7"/>
</dbReference>
<dbReference type="Bgee" id="ENSDARG00000070297">
    <property type="expression patterns" value="Expressed in gastrula and 7 other cell types or tissues"/>
</dbReference>
<dbReference type="ExpressionAtlas" id="Q5BJA5">
    <property type="expression patterns" value="baseline and differential"/>
</dbReference>
<dbReference type="GO" id="GO:0000786">
    <property type="term" value="C:nucleosome"/>
    <property type="evidence" value="ECO:0007669"/>
    <property type="project" value="UniProtKB-KW"/>
</dbReference>
<dbReference type="GO" id="GO:0005634">
    <property type="term" value="C:nucleus"/>
    <property type="evidence" value="ECO:0007669"/>
    <property type="project" value="UniProtKB-SubCell"/>
</dbReference>
<dbReference type="GO" id="GO:0003677">
    <property type="term" value="F:DNA binding"/>
    <property type="evidence" value="ECO:0007669"/>
    <property type="project" value="UniProtKB-KW"/>
</dbReference>
<dbReference type="GO" id="GO:0046982">
    <property type="term" value="F:protein heterodimerization activity"/>
    <property type="evidence" value="ECO:0007669"/>
    <property type="project" value="InterPro"/>
</dbReference>
<dbReference type="GO" id="GO:0030527">
    <property type="term" value="F:structural constituent of chromatin"/>
    <property type="evidence" value="ECO:0007669"/>
    <property type="project" value="InterPro"/>
</dbReference>
<dbReference type="CDD" id="cd22910">
    <property type="entry name" value="HFD_H2B"/>
    <property type="match status" value="1"/>
</dbReference>
<dbReference type="FunFam" id="1.10.20.10:FF:000003">
    <property type="entry name" value="Histone H2B"/>
    <property type="match status" value="1"/>
</dbReference>
<dbReference type="Gene3D" id="1.10.20.10">
    <property type="entry name" value="Histone, subunit A"/>
    <property type="match status" value="1"/>
</dbReference>
<dbReference type="InterPro" id="IPR009072">
    <property type="entry name" value="Histone-fold"/>
</dbReference>
<dbReference type="InterPro" id="IPR007125">
    <property type="entry name" value="Histone_H2A/H2B/H3"/>
</dbReference>
<dbReference type="InterPro" id="IPR000558">
    <property type="entry name" value="Histone_H2B"/>
</dbReference>
<dbReference type="InterPro" id="IPR055333">
    <property type="entry name" value="HISTONE_H2B_site"/>
</dbReference>
<dbReference type="PANTHER" id="PTHR23428">
    <property type="entry name" value="HISTONE H2B"/>
    <property type="match status" value="1"/>
</dbReference>
<dbReference type="Pfam" id="PF00125">
    <property type="entry name" value="Histone"/>
    <property type="match status" value="1"/>
</dbReference>
<dbReference type="PRINTS" id="PR00621">
    <property type="entry name" value="HISTONEH2B"/>
</dbReference>
<dbReference type="SMART" id="SM00427">
    <property type="entry name" value="H2B"/>
    <property type="match status" value="1"/>
</dbReference>
<dbReference type="SUPFAM" id="SSF47113">
    <property type="entry name" value="Histone-fold"/>
    <property type="match status" value="1"/>
</dbReference>
<dbReference type="PROSITE" id="PS00357">
    <property type="entry name" value="HISTONE_H2B"/>
    <property type="match status" value="1"/>
</dbReference>
<feature type="initiator methionine" description="Removed" evidence="1">
    <location>
        <position position="1"/>
    </location>
</feature>
<feature type="chain" id="PRO_0000244867" description="Histone H2B 1/2">
    <location>
        <begin position="2"/>
        <end position="124"/>
    </location>
</feature>
<feature type="region of interest" description="Disordered" evidence="6">
    <location>
        <begin position="1"/>
        <end position="32"/>
    </location>
</feature>
<feature type="compositionally biased region" description="Basic residues" evidence="6">
    <location>
        <begin position="8"/>
        <end position="17"/>
    </location>
</feature>
<feature type="modified residue" description="N6-acetyllysine" evidence="3">
    <location>
        <position position="6"/>
    </location>
</feature>
<feature type="modified residue" description="N6-acetyllysine" evidence="3">
    <location>
        <position position="11"/>
    </location>
</feature>
<feature type="modified residue" description="Phosphoserine" evidence="2">
    <location>
        <position position="13"/>
    </location>
</feature>
<feature type="modified residue" description="N6-acetyllysine" evidence="3">
    <location>
        <position position="14"/>
    </location>
</feature>
<feature type="modified residue" description="N6-acetyllysine" evidence="3">
    <location>
        <position position="19"/>
    </location>
</feature>
<feature type="glycosylation site" description="O-linked (GlcNAc) serine" evidence="5">
    <location>
        <position position="111"/>
    </location>
</feature>
<feature type="cross-link" description="Glycyl lysine isopeptide (Lys-Gly) (interchain with G-Cter in ubiquitin)" evidence="3">
    <location>
        <position position="119"/>
    </location>
</feature>
<proteinExistence type="evidence at transcript level"/>
<gene>
    <name type="ORF">zgc:112234</name>
</gene>
<gene>
    <name type="ORF">zgc:114046</name>
</gene>
<organism>
    <name type="scientific">Danio rerio</name>
    <name type="common">Zebrafish</name>
    <name type="synonym">Brachydanio rerio</name>
    <dbReference type="NCBI Taxonomy" id="7955"/>
    <lineage>
        <taxon>Eukaryota</taxon>
        <taxon>Metazoa</taxon>
        <taxon>Chordata</taxon>
        <taxon>Craniata</taxon>
        <taxon>Vertebrata</taxon>
        <taxon>Euteleostomi</taxon>
        <taxon>Actinopterygii</taxon>
        <taxon>Neopterygii</taxon>
        <taxon>Teleostei</taxon>
        <taxon>Ostariophysi</taxon>
        <taxon>Cypriniformes</taxon>
        <taxon>Danionidae</taxon>
        <taxon>Danioninae</taxon>
        <taxon>Danio</taxon>
    </lineage>
</organism>
<keyword id="KW-0007">Acetylation</keyword>
<keyword id="KW-0158">Chromosome</keyword>
<keyword id="KW-0238">DNA-binding</keyword>
<keyword id="KW-0325">Glycoprotein</keyword>
<keyword id="KW-1017">Isopeptide bond</keyword>
<keyword id="KW-0544">Nucleosome core</keyword>
<keyword id="KW-0539">Nucleus</keyword>
<keyword id="KW-0597">Phosphoprotein</keyword>
<keyword id="KW-1185">Reference proteome</keyword>
<keyword id="KW-0832">Ubl conjugation</keyword>
<name>H2B1_DANRE</name>
<sequence>MPEPAKAAPKKGSKKAVTKTAGKGGKKRKRTRKESYAIYVYKVLKQVHPDTGISSKAMGIMNSFVNDIFERIAGEASRLAHYNKRSTITSREIQTAVRLLLPGELAKHAVSEGTKAVTKYTSSK</sequence>
<evidence type="ECO:0000250" key="1"/>
<evidence type="ECO:0000250" key="2">
    <source>
        <dbReference type="UniProtKB" id="P06900"/>
    </source>
</evidence>
<evidence type="ECO:0000250" key="3">
    <source>
        <dbReference type="UniProtKB" id="P0C1H4"/>
    </source>
</evidence>
<evidence type="ECO:0000250" key="4">
    <source>
        <dbReference type="UniProtKB" id="P33778"/>
    </source>
</evidence>
<evidence type="ECO:0000250" key="5">
    <source>
        <dbReference type="UniProtKB" id="P62807"/>
    </source>
</evidence>
<evidence type="ECO:0000256" key="6">
    <source>
        <dbReference type="SAM" id="MobiDB-lite"/>
    </source>
</evidence>
<evidence type="ECO:0000305" key="7"/>
<reference key="1">
    <citation type="submission" date="2005-03" db="EMBL/GenBank/DDBJ databases">
        <authorList>
            <consortium name="NIH - Zebrafish Gene Collection (ZGC) project"/>
        </authorList>
    </citation>
    <scope>NUCLEOTIDE SEQUENCE [LARGE SCALE MRNA]</scope>
    <source>
        <tissue>Heart</tissue>
    </source>
</reference>
<comment type="function">
    <text>Core component of nucleosome. Nucleosomes wrap and compact DNA into chromatin, limiting DNA accessibility to the cellular machineries which require DNA as a template. Histones thereby play a central role in transcription regulation, DNA repair, DNA replication and chromosomal stability. DNA accessibility is regulated via a complex set of post-translational modifications of histones, also called histone code, and nucleosome remodeling.</text>
</comment>
<comment type="subunit">
    <text>The nucleosome is a histone octamer containing two molecules each of H2A, H2B, H3 and H4 assembled in one H3-H4 heterotetramer and two H2A-H2B heterodimers. The octamer wraps approximately 147 bp of DNA.</text>
</comment>
<comment type="subcellular location">
    <subcellularLocation>
        <location>Nucleus</location>
    </subcellularLocation>
    <subcellularLocation>
        <location>Chromosome</location>
    </subcellularLocation>
</comment>
<comment type="PTM">
    <text evidence="4">Monoubiquitination of Lys-119 by the BRE1 gives a specific tag for epigenetic transcriptional activation and is also prerequisite for histone H3 'Lys-4' and 'Lys-79' methylation.</text>
</comment>
<comment type="PTM">
    <text evidence="2">Phosphorylated during apoptosis; which facilitates apoptotic chromatin condensation.</text>
</comment>
<comment type="PTM">
    <text evidence="5">GlcNAcylation at Ser-111 promotes monoubiquitination of Lys-119. It fluctuates in response to extracellular glucose, and associates with transcribed genes (By similarity).</text>
</comment>
<comment type="similarity">
    <text evidence="7">Belongs to the histone H2B family.</text>
</comment>
<accession>Q5BJA5</accession>